<keyword id="KW-0007">Acetylation</keyword>
<keyword id="KW-0053">Apoptosis</keyword>
<keyword id="KW-0072">Autophagy</keyword>
<keyword id="KW-0597">Phosphoprotein</keyword>
<keyword id="KW-1185">Reference proteome</keyword>
<keyword id="KW-0810">Translation regulation</keyword>
<protein>
    <recommendedName>
        <fullName>Death-associated protein 1</fullName>
        <shortName>DAP-1</shortName>
    </recommendedName>
</protein>
<proteinExistence type="evidence at protein level"/>
<sequence>MSSPPEGKLETKAGHPPAVKAGGMRIVQKHPHTGDGKEERDKDDQEWESTSPPKPTVFISGVIARGDKDFPPAAAQVAHQKPHASMDKHVSPRTQHIQQPRK</sequence>
<reference key="1">
    <citation type="journal article" date="2004" name="Genome Res.">
        <title>The status, quality, and expansion of the NIH full-length cDNA project: the Mammalian Gene Collection (MGC).</title>
        <authorList>
            <consortium name="The MGC Project Team"/>
        </authorList>
    </citation>
    <scope>NUCLEOTIDE SEQUENCE [LARGE SCALE MRNA]</scope>
    <source>
        <strain>129</strain>
        <strain>FVB/N</strain>
        <strain>FVB/N-3</strain>
        <tissue>Colon</tissue>
        <tissue>Mammary tumor</tissue>
    </source>
</reference>
<reference key="2">
    <citation type="journal article" date="2007" name="Proc. Natl. Acad. Sci. U.S.A.">
        <title>Large-scale phosphorylation analysis of mouse liver.</title>
        <authorList>
            <person name="Villen J."/>
            <person name="Beausoleil S.A."/>
            <person name="Gerber S.A."/>
            <person name="Gygi S.P."/>
        </authorList>
    </citation>
    <scope>PHOSPHORYLATION [LARGE SCALE ANALYSIS] AT SER-51</scope>
    <scope>IDENTIFICATION BY MASS SPECTROMETRY [LARGE SCALE ANALYSIS]</scope>
    <source>
        <tissue>Liver</tissue>
    </source>
</reference>
<reference key="3">
    <citation type="journal article" date="2009" name="Mol. Cell. Proteomics">
        <title>Large scale localization of protein phosphorylation by use of electron capture dissociation mass spectrometry.</title>
        <authorList>
            <person name="Sweet S.M."/>
            <person name="Bailey C.M."/>
            <person name="Cunningham D.L."/>
            <person name="Heath J.K."/>
            <person name="Cooper H.J."/>
        </authorList>
    </citation>
    <scope>PHOSPHORYLATION [LARGE SCALE ANALYSIS] AT SER-51</scope>
    <scope>IDENTIFICATION BY MASS SPECTROMETRY [LARGE SCALE ANALYSIS]</scope>
    <source>
        <tissue>Embryonic fibroblast</tissue>
    </source>
</reference>
<reference key="4">
    <citation type="journal article" date="2010" name="Cell">
        <title>A tissue-specific atlas of mouse protein phosphorylation and expression.</title>
        <authorList>
            <person name="Huttlin E.L."/>
            <person name="Jedrychowski M.P."/>
            <person name="Elias J.E."/>
            <person name="Goswami T."/>
            <person name="Rad R."/>
            <person name="Beausoleil S.A."/>
            <person name="Villen J."/>
            <person name="Haas W."/>
            <person name="Sowa M.E."/>
            <person name="Gygi S.P."/>
        </authorList>
    </citation>
    <scope>PHOSPHORYLATION [LARGE SCALE ANALYSIS] AT SER-51</scope>
    <scope>IDENTIFICATION BY MASS SPECTROMETRY [LARGE SCALE ANALYSIS]</scope>
    <source>
        <tissue>Brain</tissue>
        <tissue>Brown adipose tissue</tissue>
        <tissue>Heart</tissue>
        <tissue>Kidney</tissue>
        <tissue>Liver</tissue>
        <tissue>Lung</tissue>
        <tissue>Pancreas</tissue>
        <tissue>Spleen</tissue>
        <tissue>Testis</tissue>
    </source>
</reference>
<reference key="5">
    <citation type="journal article" date="2013" name="Mol. Cell">
        <title>SIRT5-mediated lysine desuccinylation impacts diverse metabolic pathways.</title>
        <authorList>
            <person name="Park J."/>
            <person name="Chen Y."/>
            <person name="Tishkoff D.X."/>
            <person name="Peng C."/>
            <person name="Tan M."/>
            <person name="Dai L."/>
            <person name="Xie Z."/>
            <person name="Zhang Y."/>
            <person name="Zwaans B.M."/>
            <person name="Skinner M.E."/>
            <person name="Lombard D.B."/>
            <person name="Zhao Y."/>
        </authorList>
    </citation>
    <scope>ACETYLATION [LARGE SCALE ANALYSIS] AT LYS-29</scope>
    <scope>IDENTIFICATION BY MASS SPECTROMETRY [LARGE SCALE ANALYSIS]</scope>
    <source>
        <tissue>Embryonic fibroblast</tissue>
    </source>
</reference>
<comment type="function">
    <text evidence="1 2">Ribosome-binding protein involved in ribosome hibernation, a process during which ribosomes are stabilized in an inactive state and preserved from proteasomal degradation. Acts via its association with eiF5a (EIF5A and EIF5A2) at the polypeptide exit tunnel of the ribosome, preventing mRNA translation. Involved in ribosome hibernation in the mature oocyte by preventing mRNA translation, leading to ribosome inactivation. Ribosomes, which are produced in large quantities during oogenesis, are stored and translationally repressed in the oocyte and early embryo (By similarity). Also acts as a negative regulator of autophagy. Involved in mediating interferon-gamma-induced cell death (By similarity).</text>
</comment>
<comment type="subunit">
    <text evidence="2">Associates with ribosomes; inhibiting translation. Interacts with eiF5a (EIF5A and EIF5A2); inhibiting translation.</text>
</comment>
<comment type="PTM">
    <text evidence="1">Phosphorylated. Phosphorylation by MTOR inhibits the suppressive activity of DAP toward autophagy.</text>
</comment>
<comment type="similarity">
    <text evidence="4">Belongs to the DAP-DAPL1 family.</text>
</comment>
<accession>Q91XC8</accession>
<dbReference type="EMBL" id="BC010828">
    <property type="protein sequence ID" value="AAH10828.1"/>
    <property type="molecule type" value="mRNA"/>
</dbReference>
<dbReference type="EMBL" id="BC024876">
    <property type="protein sequence ID" value="AAH24876.1"/>
    <property type="molecule type" value="mRNA"/>
</dbReference>
<dbReference type="EMBL" id="BC057669">
    <property type="protein sequence ID" value="AAH57669.1"/>
    <property type="molecule type" value="mRNA"/>
</dbReference>
<dbReference type="CCDS" id="CCDS27406.1"/>
<dbReference type="RefSeq" id="NP_666169.1">
    <property type="nucleotide sequence ID" value="NM_146057.3"/>
</dbReference>
<dbReference type="SMR" id="Q91XC8"/>
<dbReference type="BioGRID" id="230149">
    <property type="interactions" value="3"/>
</dbReference>
<dbReference type="FunCoup" id="Q91XC8">
    <property type="interactions" value="76"/>
</dbReference>
<dbReference type="STRING" id="10090.ENSMUSP00000047186"/>
<dbReference type="iPTMnet" id="Q91XC8"/>
<dbReference type="PhosphoSitePlus" id="Q91XC8"/>
<dbReference type="jPOST" id="Q91XC8"/>
<dbReference type="PaxDb" id="10090-ENSMUSP00000047186"/>
<dbReference type="ProteomicsDB" id="279275"/>
<dbReference type="Pumba" id="Q91XC8"/>
<dbReference type="DNASU" id="223453"/>
<dbReference type="Ensembl" id="ENSMUST00000044524.16">
    <property type="protein sequence ID" value="ENSMUSP00000047186.10"/>
    <property type="gene ID" value="ENSMUSG00000039168.16"/>
</dbReference>
<dbReference type="GeneID" id="223453"/>
<dbReference type="KEGG" id="mmu:223453"/>
<dbReference type="UCSC" id="uc007vkc.2">
    <property type="organism name" value="mouse"/>
</dbReference>
<dbReference type="AGR" id="MGI:1918190"/>
<dbReference type="CTD" id="1611"/>
<dbReference type="MGI" id="MGI:1918190">
    <property type="gene designation" value="Dap"/>
</dbReference>
<dbReference type="VEuPathDB" id="HostDB:ENSMUSG00000039168"/>
<dbReference type="eggNOG" id="ENOG502S4ST">
    <property type="taxonomic scope" value="Eukaryota"/>
</dbReference>
<dbReference type="GeneTree" id="ENSGT00940000154574"/>
<dbReference type="HOGENOM" id="CLU_150759_2_0_1"/>
<dbReference type="InParanoid" id="Q91XC8"/>
<dbReference type="OMA" id="QKHPHAP"/>
<dbReference type="OrthoDB" id="5973225at2759"/>
<dbReference type="PhylomeDB" id="Q91XC8"/>
<dbReference type="TreeFam" id="TF329716"/>
<dbReference type="BioGRID-ORCS" id="223453">
    <property type="hits" value="3 hits in 76 CRISPR screens"/>
</dbReference>
<dbReference type="ChiTaRS" id="Dap">
    <property type="organism name" value="mouse"/>
</dbReference>
<dbReference type="PRO" id="PR:Q91XC8"/>
<dbReference type="Proteomes" id="UP000000589">
    <property type="component" value="Chromosome 15"/>
</dbReference>
<dbReference type="RNAct" id="Q91XC8">
    <property type="molecule type" value="protein"/>
</dbReference>
<dbReference type="Bgee" id="ENSMUSG00000039168">
    <property type="expression patterns" value="Expressed in urinary bladder urothelium and 251 other cell types or tissues"/>
</dbReference>
<dbReference type="ExpressionAtlas" id="Q91XC8">
    <property type="expression patterns" value="baseline and differential"/>
</dbReference>
<dbReference type="GO" id="GO:0006915">
    <property type="term" value="P:apoptotic process"/>
    <property type="evidence" value="ECO:0000266"/>
    <property type="project" value="MGI"/>
</dbReference>
<dbReference type="GO" id="GO:0097190">
    <property type="term" value="P:apoptotic signaling pathway"/>
    <property type="evidence" value="ECO:0007669"/>
    <property type="project" value="Ensembl"/>
</dbReference>
<dbReference type="GO" id="GO:0006914">
    <property type="term" value="P:autophagy"/>
    <property type="evidence" value="ECO:0007669"/>
    <property type="project" value="UniProtKB-KW"/>
</dbReference>
<dbReference type="GO" id="GO:0010507">
    <property type="term" value="P:negative regulation of autophagy"/>
    <property type="evidence" value="ECO:0007669"/>
    <property type="project" value="Ensembl"/>
</dbReference>
<dbReference type="GO" id="GO:0006417">
    <property type="term" value="P:regulation of translation"/>
    <property type="evidence" value="ECO:0007669"/>
    <property type="project" value="UniProtKB-KW"/>
</dbReference>
<dbReference type="InterPro" id="IPR024130">
    <property type="entry name" value="DAP1/DAPL1"/>
</dbReference>
<dbReference type="PANTHER" id="PTHR13177">
    <property type="entry name" value="DEATH-ASSOCIATED PROTEIN 1"/>
    <property type="match status" value="1"/>
</dbReference>
<dbReference type="PANTHER" id="PTHR13177:SF3">
    <property type="entry name" value="DEATH-ASSOCIATED PROTEIN 1"/>
    <property type="match status" value="1"/>
</dbReference>
<dbReference type="Pfam" id="PF15228">
    <property type="entry name" value="DAP"/>
    <property type="match status" value="1"/>
</dbReference>
<feature type="initiator methionine" description="Removed" evidence="1">
    <location>
        <position position="1"/>
    </location>
</feature>
<feature type="chain" id="PRO_0000079783" description="Death-associated protein 1">
    <location>
        <begin position="2"/>
        <end position="102"/>
    </location>
</feature>
<feature type="region of interest" description="Disordered" evidence="3">
    <location>
        <begin position="1"/>
        <end position="102"/>
    </location>
</feature>
<feature type="compositionally biased region" description="Basic and acidic residues" evidence="3">
    <location>
        <begin position="32"/>
        <end position="43"/>
    </location>
</feature>
<feature type="compositionally biased region" description="Polar residues" evidence="3">
    <location>
        <begin position="92"/>
        <end position="102"/>
    </location>
</feature>
<feature type="modified residue" description="N-acetylserine" evidence="1">
    <location>
        <position position="2"/>
    </location>
</feature>
<feature type="modified residue" description="Phosphoserine; by MTOR" evidence="1">
    <location>
        <position position="3"/>
    </location>
</feature>
<feature type="modified residue" description="N6-acetyllysine" evidence="8">
    <location>
        <position position="29"/>
    </location>
</feature>
<feature type="modified residue" description="Phosphoserine" evidence="1">
    <location>
        <position position="49"/>
    </location>
</feature>
<feature type="modified residue" description="Phosphoserine" evidence="5 6 7">
    <location>
        <position position="51"/>
    </location>
</feature>
<feature type="modified residue" description="Phosphoserine" evidence="1">
    <location>
        <position position="91"/>
    </location>
</feature>
<evidence type="ECO:0000250" key="1">
    <source>
        <dbReference type="UniProtKB" id="P51397"/>
    </source>
</evidence>
<evidence type="ECO:0000250" key="2">
    <source>
        <dbReference type="UniProtKB" id="Q9I9N1"/>
    </source>
</evidence>
<evidence type="ECO:0000256" key="3">
    <source>
        <dbReference type="SAM" id="MobiDB-lite"/>
    </source>
</evidence>
<evidence type="ECO:0000305" key="4"/>
<evidence type="ECO:0007744" key="5">
    <source>
    </source>
</evidence>
<evidence type="ECO:0007744" key="6">
    <source>
    </source>
</evidence>
<evidence type="ECO:0007744" key="7">
    <source>
    </source>
</evidence>
<evidence type="ECO:0007744" key="8">
    <source>
    </source>
</evidence>
<gene>
    <name type="primary">Dap</name>
</gene>
<name>DAP1_MOUSE</name>
<organism>
    <name type="scientific">Mus musculus</name>
    <name type="common">Mouse</name>
    <dbReference type="NCBI Taxonomy" id="10090"/>
    <lineage>
        <taxon>Eukaryota</taxon>
        <taxon>Metazoa</taxon>
        <taxon>Chordata</taxon>
        <taxon>Craniata</taxon>
        <taxon>Vertebrata</taxon>
        <taxon>Euteleostomi</taxon>
        <taxon>Mammalia</taxon>
        <taxon>Eutheria</taxon>
        <taxon>Euarchontoglires</taxon>
        <taxon>Glires</taxon>
        <taxon>Rodentia</taxon>
        <taxon>Myomorpha</taxon>
        <taxon>Muroidea</taxon>
        <taxon>Muridae</taxon>
        <taxon>Murinae</taxon>
        <taxon>Mus</taxon>
        <taxon>Mus</taxon>
    </lineage>
</organism>